<accession>A5ABX6</accession>
<protein>
    <recommendedName>
        <fullName evidence="2">Eukaryotic translation initiation factor 3 subunit D</fullName>
        <shortName evidence="2">eIF3d</shortName>
    </recommendedName>
</protein>
<sequence>MAPISIADIVAALPAEDTWGPATASDNMLQGVPYAPFSKGDKLGRMADWTAESKDPNRAGRQAYNRNYRDQQVYGAGSSSLFAVQVAEDESSFSVVDNTRSSAKRTFGRGGGTVFRGRAQRGGAQRGGRAGFQRVGAGRGQGGDRYYDNRSGGRGNRGRRFGWKDYDKPQRTREPSVNVRPDWNMLEEVDFSRLSKLNLEAPEGEDVDSYGFLYHYDRSYDKAPVKNAERRLQSLDRAAYNVTTTQDPVIQELAEKNEATIFATSDILSMLMCAPRSVYSWDIVIVHQGNKIYFDKREGASLDLVTVNENAADAPLELADSANKQDAINTPSALAMEATFINHNFALQTVVESEDSKVSLAHPNPFYNAAEETEPLASKAYKYRRFDLSLERDDEPVNMIVRTEVDAIMKNPVNGEDQQLLVKALNEFDSKAQGSGGALDWRSKLWSQRGAVVATEMKNNSVKLARWTTQAILAKADGMKLGFVSRANPRSAAGHVVLGVVGYKPRDLAAQMNLNLGNGWGIVRTIVDRIRALDADEDEDKVTKYVLIKDPNRPVLRLYSVPATTFEEEEEVAAEEQEAAEEEAEE</sequence>
<name>EIF3D_ASPNC</name>
<proteinExistence type="inferred from homology"/>
<dbReference type="EMBL" id="AM270341">
    <property type="protein sequence ID" value="CAK97248.1"/>
    <property type="molecule type" value="Genomic_DNA"/>
</dbReference>
<dbReference type="RefSeq" id="XP_001396916.1">
    <property type="nucleotide sequence ID" value="XM_001396879.2"/>
</dbReference>
<dbReference type="SMR" id="A5ABX6"/>
<dbReference type="EnsemblFungi" id="CAK97248">
    <property type="protein sequence ID" value="CAK97248"/>
    <property type="gene ID" value="An15g03780"/>
</dbReference>
<dbReference type="GeneID" id="4987979"/>
<dbReference type="KEGG" id="ang:An15g03780"/>
<dbReference type="VEuPathDB" id="FungiDB:An15g03780"/>
<dbReference type="HOGENOM" id="CLU_024521_2_0_1"/>
<dbReference type="Proteomes" id="UP000006706">
    <property type="component" value="Chromosome 3R"/>
</dbReference>
<dbReference type="GO" id="GO:0005829">
    <property type="term" value="C:cytosol"/>
    <property type="evidence" value="ECO:0007669"/>
    <property type="project" value="EnsemblFungi"/>
</dbReference>
<dbReference type="GO" id="GO:0016282">
    <property type="term" value="C:eukaryotic 43S preinitiation complex"/>
    <property type="evidence" value="ECO:0007669"/>
    <property type="project" value="UniProtKB-UniRule"/>
</dbReference>
<dbReference type="GO" id="GO:0033290">
    <property type="term" value="C:eukaryotic 48S preinitiation complex"/>
    <property type="evidence" value="ECO:0007669"/>
    <property type="project" value="UniProtKB-UniRule"/>
</dbReference>
<dbReference type="GO" id="GO:0071540">
    <property type="term" value="C:eukaryotic translation initiation factor 3 complex, eIF3e"/>
    <property type="evidence" value="ECO:0007669"/>
    <property type="project" value="EnsemblFungi"/>
</dbReference>
<dbReference type="GO" id="GO:0071541">
    <property type="term" value="C:eukaryotic translation initiation factor 3 complex, eIF3m"/>
    <property type="evidence" value="ECO:0007669"/>
    <property type="project" value="EnsemblFungi"/>
</dbReference>
<dbReference type="GO" id="GO:0098808">
    <property type="term" value="F:mRNA cap binding"/>
    <property type="evidence" value="ECO:0007669"/>
    <property type="project" value="UniProtKB-UniRule"/>
</dbReference>
<dbReference type="GO" id="GO:0003743">
    <property type="term" value="F:translation initiation factor activity"/>
    <property type="evidence" value="ECO:0007669"/>
    <property type="project" value="UniProtKB-UniRule"/>
</dbReference>
<dbReference type="GO" id="GO:0002191">
    <property type="term" value="P:cap-dependent translational initiation"/>
    <property type="evidence" value="ECO:0007669"/>
    <property type="project" value="UniProtKB-UniRule"/>
</dbReference>
<dbReference type="GO" id="GO:0001732">
    <property type="term" value="P:formation of cytoplasmic translation initiation complex"/>
    <property type="evidence" value="ECO:0007669"/>
    <property type="project" value="UniProtKB-UniRule"/>
</dbReference>
<dbReference type="HAMAP" id="MF_03003">
    <property type="entry name" value="eIF3d"/>
    <property type="match status" value="1"/>
</dbReference>
<dbReference type="InterPro" id="IPR007783">
    <property type="entry name" value="eIF3d"/>
</dbReference>
<dbReference type="PANTHER" id="PTHR12399">
    <property type="entry name" value="EUKARYOTIC TRANSLATION INITIATION FACTOR 3 SUBUNIT 7"/>
    <property type="match status" value="1"/>
</dbReference>
<dbReference type="PANTHER" id="PTHR12399:SF0">
    <property type="entry name" value="EUKARYOTIC TRANSLATION INITIATION FACTOR 3 SUBUNIT D"/>
    <property type="match status" value="1"/>
</dbReference>
<dbReference type="Pfam" id="PF05091">
    <property type="entry name" value="eIF-3_zeta"/>
    <property type="match status" value="1"/>
</dbReference>
<dbReference type="PIRSF" id="PIRSF016281">
    <property type="entry name" value="EIF-3_zeta"/>
    <property type="match status" value="1"/>
</dbReference>
<comment type="function">
    <text evidence="2">mRNA cap-binding component of the eukaryotic translation initiation factor 3 (eIF-3) complex, which is involved in protein synthesis of a specialized repertoire of mRNAs and, together with other initiation factors, stimulates binding of mRNA and methionyl-tRNAi to the 40S ribosome. The eIF-3 complex specifically targets and initiates translation of a subset of mRNAs involved in cell proliferation. In the eIF-3 complex, eif3d specifically recognizes and binds the 7-methylguanosine cap of a subset of mRNAs.</text>
</comment>
<comment type="subunit">
    <text evidence="2">Component of the eukaryotic translation initiation factor 3 (eIF-3) complex.</text>
</comment>
<comment type="subcellular location">
    <subcellularLocation>
        <location evidence="2">Cytoplasm</location>
    </subcellularLocation>
</comment>
<comment type="domain">
    <text evidence="2">The RNA gate region regulates mRNA cap recognition to prevent promiscuous mRNA-binding before assembly of eif3d into the full eukaryotic translation initiation factor 3 (eIF-3) complex.</text>
</comment>
<comment type="similarity">
    <text evidence="2">Belongs to the eIF-3 subunit D family.</text>
</comment>
<gene>
    <name type="ORF">An15g03780</name>
</gene>
<evidence type="ECO:0000250" key="1">
    <source>
        <dbReference type="UniProtKB" id="K7IM66"/>
    </source>
</evidence>
<evidence type="ECO:0000255" key="2">
    <source>
        <dbReference type="HAMAP-Rule" id="MF_03003"/>
    </source>
</evidence>
<evidence type="ECO:0000256" key="3">
    <source>
        <dbReference type="SAM" id="MobiDB-lite"/>
    </source>
</evidence>
<keyword id="KW-0963">Cytoplasm</keyword>
<keyword id="KW-0396">Initiation factor</keyword>
<keyword id="KW-0648">Protein biosynthesis</keyword>
<keyword id="KW-1185">Reference proteome</keyword>
<keyword id="KW-0694">RNA-binding</keyword>
<feature type="chain" id="PRO_0000364170" description="Eukaryotic translation initiation factor 3 subunit D">
    <location>
        <begin position="1"/>
        <end position="586"/>
    </location>
</feature>
<feature type="region of interest" description="Disordered" evidence="3">
    <location>
        <begin position="102"/>
        <end position="176"/>
    </location>
</feature>
<feature type="region of interest" description="RNA gate" evidence="1">
    <location>
        <begin position="301"/>
        <end position="315"/>
    </location>
</feature>
<feature type="region of interest" description="Disordered" evidence="3">
    <location>
        <begin position="567"/>
        <end position="586"/>
    </location>
</feature>
<feature type="compositionally biased region" description="Basic and acidic residues" evidence="3">
    <location>
        <begin position="162"/>
        <end position="174"/>
    </location>
</feature>
<organism>
    <name type="scientific">Aspergillus niger (strain ATCC MYA-4892 / CBS 513.88 / FGSC A1513)</name>
    <dbReference type="NCBI Taxonomy" id="425011"/>
    <lineage>
        <taxon>Eukaryota</taxon>
        <taxon>Fungi</taxon>
        <taxon>Dikarya</taxon>
        <taxon>Ascomycota</taxon>
        <taxon>Pezizomycotina</taxon>
        <taxon>Eurotiomycetes</taxon>
        <taxon>Eurotiomycetidae</taxon>
        <taxon>Eurotiales</taxon>
        <taxon>Aspergillaceae</taxon>
        <taxon>Aspergillus</taxon>
        <taxon>Aspergillus subgen. Circumdati</taxon>
    </lineage>
</organism>
<reference key="1">
    <citation type="journal article" date="2007" name="Nat. Biotechnol.">
        <title>Genome sequencing and analysis of the versatile cell factory Aspergillus niger CBS 513.88.</title>
        <authorList>
            <person name="Pel H.J."/>
            <person name="de Winde J.H."/>
            <person name="Archer D.B."/>
            <person name="Dyer P.S."/>
            <person name="Hofmann G."/>
            <person name="Schaap P.J."/>
            <person name="Turner G."/>
            <person name="de Vries R.P."/>
            <person name="Albang R."/>
            <person name="Albermann K."/>
            <person name="Andersen M.R."/>
            <person name="Bendtsen J.D."/>
            <person name="Benen J.A.E."/>
            <person name="van den Berg M."/>
            <person name="Breestraat S."/>
            <person name="Caddick M.X."/>
            <person name="Contreras R."/>
            <person name="Cornell M."/>
            <person name="Coutinho P.M."/>
            <person name="Danchin E.G.J."/>
            <person name="Debets A.J.M."/>
            <person name="Dekker P."/>
            <person name="van Dijck P.W.M."/>
            <person name="van Dijk A."/>
            <person name="Dijkhuizen L."/>
            <person name="Driessen A.J.M."/>
            <person name="d'Enfert C."/>
            <person name="Geysens S."/>
            <person name="Goosen C."/>
            <person name="Groot G.S.P."/>
            <person name="de Groot P.W.J."/>
            <person name="Guillemette T."/>
            <person name="Henrissat B."/>
            <person name="Herweijer M."/>
            <person name="van den Hombergh J.P.T.W."/>
            <person name="van den Hondel C.A.M.J.J."/>
            <person name="van der Heijden R.T.J.M."/>
            <person name="van der Kaaij R.M."/>
            <person name="Klis F.M."/>
            <person name="Kools H.J."/>
            <person name="Kubicek C.P."/>
            <person name="van Kuyk P.A."/>
            <person name="Lauber J."/>
            <person name="Lu X."/>
            <person name="van der Maarel M.J.E.C."/>
            <person name="Meulenberg R."/>
            <person name="Menke H."/>
            <person name="Mortimer M.A."/>
            <person name="Nielsen J."/>
            <person name="Oliver S.G."/>
            <person name="Olsthoorn M."/>
            <person name="Pal K."/>
            <person name="van Peij N.N.M.E."/>
            <person name="Ram A.F.J."/>
            <person name="Rinas U."/>
            <person name="Roubos J.A."/>
            <person name="Sagt C.M.J."/>
            <person name="Schmoll M."/>
            <person name="Sun J."/>
            <person name="Ussery D."/>
            <person name="Varga J."/>
            <person name="Vervecken W."/>
            <person name="van de Vondervoort P.J.J."/>
            <person name="Wedler H."/>
            <person name="Woesten H.A.B."/>
            <person name="Zeng A.-P."/>
            <person name="van Ooyen A.J.J."/>
            <person name="Visser J."/>
            <person name="Stam H."/>
        </authorList>
    </citation>
    <scope>NUCLEOTIDE SEQUENCE [LARGE SCALE GENOMIC DNA]</scope>
    <source>
        <strain>ATCC MYA-4892 / CBS 513.88 / FGSC A1513</strain>
    </source>
</reference>